<reference key="1">
    <citation type="journal article" date="1997" name="Nature">
        <title>The complete genome sequence of the hyperthermophilic, sulphate-reducing archaeon Archaeoglobus fulgidus.</title>
        <authorList>
            <person name="Klenk H.-P."/>
            <person name="Clayton R.A."/>
            <person name="Tomb J.-F."/>
            <person name="White O."/>
            <person name="Nelson K.E."/>
            <person name="Ketchum K.A."/>
            <person name="Dodson R.J."/>
            <person name="Gwinn M.L."/>
            <person name="Hickey E.K."/>
            <person name="Peterson J.D."/>
            <person name="Richardson D.L."/>
            <person name="Kerlavage A.R."/>
            <person name="Graham D.E."/>
            <person name="Kyrpides N.C."/>
            <person name="Fleischmann R.D."/>
            <person name="Quackenbush J."/>
            <person name="Lee N.H."/>
            <person name="Sutton G.G."/>
            <person name="Gill S.R."/>
            <person name="Kirkness E.F."/>
            <person name="Dougherty B.A."/>
            <person name="McKenney K."/>
            <person name="Adams M.D."/>
            <person name="Loftus B.J."/>
            <person name="Peterson S.N."/>
            <person name="Reich C.I."/>
            <person name="McNeil L.K."/>
            <person name="Badger J.H."/>
            <person name="Glodek A."/>
            <person name="Zhou L."/>
            <person name="Overbeek R."/>
            <person name="Gocayne J.D."/>
            <person name="Weidman J.F."/>
            <person name="McDonald L.A."/>
            <person name="Utterback T.R."/>
            <person name="Cotton M.D."/>
            <person name="Spriggs T."/>
            <person name="Artiach P."/>
            <person name="Kaine B.P."/>
            <person name="Sykes S.M."/>
            <person name="Sadow P.W."/>
            <person name="D'Andrea K.P."/>
            <person name="Bowman C."/>
            <person name="Fujii C."/>
            <person name="Garland S.A."/>
            <person name="Mason T.M."/>
            <person name="Olsen G.J."/>
            <person name="Fraser C.M."/>
            <person name="Smith H.O."/>
            <person name="Woese C.R."/>
            <person name="Venter J.C."/>
        </authorList>
    </citation>
    <scope>NUCLEOTIDE SEQUENCE [LARGE SCALE GENOMIC DNA]</scope>
    <source>
        <strain>ATCC 49558 / DSM 4304 / JCM 9628 / NBRC 100126 / VC-16</strain>
    </source>
</reference>
<feature type="chain" id="PRO_0000155072" description="Acetyl-CoA decarbonylase/synthase complex subunit alpha 1">
    <location>
        <begin position="1"/>
        <end position="802"/>
    </location>
</feature>
<feature type="domain" description="4Fe-4S ferredoxin-type 1" evidence="1">
    <location>
        <begin position="395"/>
        <end position="424"/>
    </location>
</feature>
<feature type="domain" description="4Fe-4S ferredoxin-type 2" evidence="1">
    <location>
        <begin position="435"/>
        <end position="464"/>
    </location>
</feature>
<feature type="binding site" evidence="1">
    <location>
        <position position="68"/>
    </location>
    <ligand>
        <name>[4Fe-4S] cluster</name>
        <dbReference type="ChEBI" id="CHEBI:49883"/>
        <label>2</label>
    </ligand>
</feature>
<feature type="binding site" evidence="1">
    <location>
        <position position="71"/>
    </location>
    <ligand>
        <name>[4Fe-4S] cluster</name>
        <dbReference type="ChEBI" id="CHEBI:49883"/>
        <label>2</label>
    </ligand>
</feature>
<feature type="binding site" evidence="1">
    <location>
        <position position="76"/>
    </location>
    <ligand>
        <name>[4Fe-4S] cluster</name>
        <dbReference type="ChEBI" id="CHEBI:49883"/>
        <label>2</label>
    </ligand>
</feature>
<feature type="binding site" evidence="1">
    <location>
        <position position="86"/>
    </location>
    <ligand>
        <name>[4Fe-4S] cluster</name>
        <dbReference type="ChEBI" id="CHEBI:49883"/>
        <label>2</label>
    </ligand>
</feature>
<feature type="binding site" evidence="1">
    <location>
        <position position="109"/>
    </location>
    <ligand>
        <name>CO</name>
        <dbReference type="ChEBI" id="CHEBI:17245"/>
    </ligand>
</feature>
<feature type="binding site" evidence="1">
    <location>
        <position position="243"/>
    </location>
    <ligand>
        <name>[Ni-4Fe-4S] cluster</name>
        <dbReference type="ChEBI" id="CHEBI:47739"/>
    </ligand>
</feature>
<feature type="binding site" evidence="1">
    <location>
        <position position="271"/>
    </location>
    <ligand>
        <name>[Ni-4Fe-4S] cluster</name>
        <dbReference type="ChEBI" id="CHEBI:47739"/>
    </ligand>
</feature>
<feature type="binding site" evidence="1">
    <location>
        <position position="310"/>
    </location>
    <ligand>
        <name>[Ni-4Fe-4S] cluster</name>
        <dbReference type="ChEBI" id="CHEBI:47739"/>
    </ligand>
</feature>
<feature type="binding site" evidence="1">
    <location>
        <position position="405"/>
    </location>
    <ligand>
        <name>[4Fe-4S] cluster</name>
        <dbReference type="ChEBI" id="CHEBI:49883"/>
        <label>3</label>
    </ligand>
</feature>
<feature type="binding site" evidence="1">
    <location>
        <position position="408"/>
    </location>
    <ligand>
        <name>[4Fe-4S] cluster</name>
        <dbReference type="ChEBI" id="CHEBI:49883"/>
        <label>3</label>
    </ligand>
</feature>
<feature type="binding site" evidence="1">
    <location>
        <position position="411"/>
    </location>
    <ligand>
        <name>[4Fe-4S] cluster</name>
        <dbReference type="ChEBI" id="CHEBI:49883"/>
        <label>3</label>
    </ligand>
</feature>
<feature type="binding site" evidence="1">
    <location>
        <position position="415"/>
    </location>
    <ligand>
        <name>[4Fe-4S] cluster</name>
        <dbReference type="ChEBI" id="CHEBI:49883"/>
        <label>4</label>
    </ligand>
</feature>
<feature type="binding site" evidence="1">
    <location>
        <position position="444"/>
    </location>
    <ligand>
        <name>[4Fe-4S] cluster</name>
        <dbReference type="ChEBI" id="CHEBI:49883"/>
        <label>4</label>
    </ligand>
</feature>
<feature type="binding site" evidence="1">
    <location>
        <position position="447"/>
    </location>
    <ligand>
        <name>[4Fe-4S] cluster</name>
        <dbReference type="ChEBI" id="CHEBI:49883"/>
        <label>4</label>
    </ligand>
</feature>
<feature type="binding site" evidence="1">
    <location>
        <position position="450"/>
    </location>
    <ligand>
        <name>[4Fe-4S] cluster</name>
        <dbReference type="ChEBI" id="CHEBI:49883"/>
        <label>4</label>
    </ligand>
</feature>
<feature type="binding site" evidence="1">
    <location>
        <position position="454"/>
    </location>
    <ligand>
        <name>[4Fe-4S] cluster</name>
        <dbReference type="ChEBI" id="CHEBI:49883"/>
        <label>3</label>
    </ligand>
</feature>
<feature type="binding site" evidence="1">
    <location>
        <position position="512"/>
    </location>
    <ligand>
        <name>[Ni-4Fe-4S] cluster</name>
        <dbReference type="ChEBI" id="CHEBI:47739"/>
    </ligand>
</feature>
<feature type="binding site" evidence="1">
    <location>
        <position position="541"/>
    </location>
    <ligand>
        <name>[Ni-4Fe-4S] cluster</name>
        <dbReference type="ChEBI" id="CHEBI:47739"/>
    </ligand>
</feature>
<feature type="binding site" evidence="1">
    <location>
        <position position="576"/>
    </location>
    <ligand>
        <name>[Ni-4Fe-4S] cluster</name>
        <dbReference type="ChEBI" id="CHEBI:47739"/>
    </ligand>
</feature>
<protein>
    <recommendedName>
        <fullName evidence="1">Acetyl-CoA decarbonylase/synthase complex subunit alpha 1</fullName>
        <shortName evidence="1">ACDS complex subunit alpha 1</shortName>
        <ecNumber evidence="1">1.2.7.4</ecNumber>
    </recommendedName>
    <alternativeName>
        <fullName evidence="1">ACDS complex carbon monoxide dehydrogenase subunit alpha 1</fullName>
        <shortName evidence="1">ACDS CODH subunit alpha 1</shortName>
    </alternativeName>
</protein>
<sequence length="802" mass="89524">MFELKKGALFVDEMKNVSIRIGKVVEEEEEVWEEAGPTPKPGILELRKWDHKLLERYEPFYAPMQDFCNLCTMGPCDLSMNKRGACGIDLKTAKARLVTIACCIGASAHTAHARHLVDHLIEEFGEDFPIDLGGDVNVEAPIIRTVVGIKPKTLGDLREALNWAEKEIVKVLHSTHIGNEESLLDYESKAMHVSMADHVGMEVADIAQIVAYNFPKAEPDTPLVDTGFGIVDKSKPTIVVVGHNVMYARPVADYLEEMGRIDDFELAGLCCTAHDMTRYNAKAKIFGPISYQLRVIRAGIPDVMISDEQCIRADLLEACKKMGIPLIATSDAAARGLPDVSDWPVEKIVDALVSGKLPGVFLPIPEKVGQVAPLVAEAIFKKHGGERKYKFFESDEALMEEINKCTQCMNCVFTCPHSLRVDQGMAHAQKTGDLSKLAQLEEQCLACMKCEQACPKNIKIINVIMRANYDRLYNKTGKTRVGRGPIQDTEIRKVGQPIVFGQIPGVIAAVGCINFPDEMKSIREILEEFLKRRYIVVTSGCHAMDIGMIKDEEGKTLYEKYPGNFDAGGLVNTGSCVANSHIAGAAIKIANIFAMRPLRGNYAEIADYVLNRVGAVGFSWGPYSHKAASIATGFNRLGVPVVVGPHGTKYRRAYIGKPWKKDKWWVYDIKSRQKVFIEPAPDSLLVAVETKEEAIVQLARLCIRPNDTNQGRQIKLTHYIELHQKYYGDLPDDWAVYVRSEADLPLKMRDQLLKVLEEQYGWKIDWDKKKIVEGPVRHFDAGFNPTIVEEVYEKYAGEKAPR</sequence>
<proteinExistence type="inferred from homology"/>
<name>ACDA1_ARCFU</name>
<comment type="function">
    <text evidence="1">Part of the ACDS complex that catalyzes the reversible cleavage of acetyl-CoA, allowing autotrophic growth from CO(2). The alpha-epsilon subcomponent functions as a carbon monoxide dehydrogenase.</text>
</comment>
<comment type="catalytic activity">
    <reaction evidence="1">
        <text>CO + 2 oxidized [2Fe-2S]-[ferredoxin] + H2O = 2 reduced [2Fe-2S]-[ferredoxin] + CO2 + 2 H(+)</text>
        <dbReference type="Rhea" id="RHEA:21040"/>
        <dbReference type="Rhea" id="RHEA-COMP:10000"/>
        <dbReference type="Rhea" id="RHEA-COMP:10001"/>
        <dbReference type="ChEBI" id="CHEBI:15377"/>
        <dbReference type="ChEBI" id="CHEBI:15378"/>
        <dbReference type="ChEBI" id="CHEBI:16526"/>
        <dbReference type="ChEBI" id="CHEBI:17245"/>
        <dbReference type="ChEBI" id="CHEBI:33737"/>
        <dbReference type="ChEBI" id="CHEBI:33738"/>
        <dbReference type="EC" id="1.2.7.4"/>
    </reaction>
</comment>
<comment type="cofactor">
    <cofactor evidence="1">
        <name>[4Fe-4S] cluster</name>
        <dbReference type="ChEBI" id="CHEBI:49883"/>
    </cofactor>
    <text evidence="2">Binds 6 [4Fe-4S] clusters per heterotetramer.</text>
</comment>
<comment type="cofactor">
    <cofactor evidence="1">
        <name>[Ni-4Fe-4S] cluster</name>
        <dbReference type="ChEBI" id="CHEBI:47739"/>
    </cofactor>
    <text evidence="1">Binds 2 [Ni-4Fe-4S] clusters per heterotetramer.</text>
</comment>
<comment type="subunit">
    <text evidence="1">Heterotetramer of two alpha and two epsilon subunits. The ACDS complex is made up of alpha, epsilon, beta, gamma and delta subunits with a probable stoichiometry of (alpha(2)epsilon(2))(4)-beta(8)-(gamma(1)delta(1))(8).</text>
</comment>
<comment type="domain">
    <text evidence="1">Cluster B is an all-cysteinyl-liganded 4Fe-4S cluster; cluster C is a mixed Ni-Fe-S cluster which is the active site of CO oxidation. Cluster D is also an all-cysteinyl-liganded 4Fe-4S cluster that bridges the two subunits of the CODH dimer. Contains two additional 4Fe-4S clusters, dubbed E and F, that probably transport electrons from ferredoxin to the B cluster.</text>
</comment>
<comment type="similarity">
    <text evidence="1">Belongs to the Ni-containing carbon monoxide dehydrogenase family.</text>
</comment>
<comment type="caution">
    <text evidence="2">This protein lacks the conserved Cys in positions 65 and 69; they are replaced by a Gln and an Asn, respectively. It is therefore possible that the D-cluster is either altered or missing in this protein, which may not form heterotetramers.</text>
</comment>
<organism>
    <name type="scientific">Archaeoglobus fulgidus (strain ATCC 49558 / DSM 4304 / JCM 9628 / NBRC 100126 / VC-16)</name>
    <dbReference type="NCBI Taxonomy" id="224325"/>
    <lineage>
        <taxon>Archaea</taxon>
        <taxon>Methanobacteriati</taxon>
        <taxon>Methanobacteriota</taxon>
        <taxon>Archaeoglobi</taxon>
        <taxon>Archaeoglobales</taxon>
        <taxon>Archaeoglobaceae</taxon>
        <taxon>Archaeoglobus</taxon>
    </lineage>
</organism>
<accession>O29165</accession>
<evidence type="ECO:0000255" key="1">
    <source>
        <dbReference type="HAMAP-Rule" id="MF_01137"/>
    </source>
</evidence>
<evidence type="ECO:0000305" key="2"/>
<gene>
    <name evidence="1" type="primary">cdhA1</name>
    <name type="ordered locus">AF_1100</name>
</gene>
<keyword id="KW-0004">4Fe-4S</keyword>
<keyword id="KW-0408">Iron</keyword>
<keyword id="KW-0411">Iron-sulfur</keyword>
<keyword id="KW-0479">Metal-binding</keyword>
<keyword id="KW-0533">Nickel</keyword>
<keyword id="KW-0560">Oxidoreductase</keyword>
<keyword id="KW-1185">Reference proteome</keyword>
<keyword id="KW-0677">Repeat</keyword>
<dbReference type="EC" id="1.2.7.4" evidence="1"/>
<dbReference type="EMBL" id="AE000782">
    <property type="protein sequence ID" value="AAB90136.1"/>
    <property type="molecule type" value="Genomic_DNA"/>
</dbReference>
<dbReference type="PIR" id="C69387">
    <property type="entry name" value="C69387"/>
</dbReference>
<dbReference type="RefSeq" id="WP_010878596.1">
    <property type="nucleotide sequence ID" value="NC_000917.1"/>
</dbReference>
<dbReference type="SMR" id="O29165"/>
<dbReference type="STRING" id="224325.AF_1100"/>
<dbReference type="PaxDb" id="224325-AF_1100"/>
<dbReference type="EnsemblBacteria" id="AAB90136">
    <property type="protein sequence ID" value="AAB90136"/>
    <property type="gene ID" value="AF_1100"/>
</dbReference>
<dbReference type="GeneID" id="1484322"/>
<dbReference type="KEGG" id="afu:AF_1100"/>
<dbReference type="eggNOG" id="arCOG02428">
    <property type="taxonomic scope" value="Archaea"/>
</dbReference>
<dbReference type="HOGENOM" id="CLU_361186_0_0_2"/>
<dbReference type="OrthoDB" id="35334at2157"/>
<dbReference type="PhylomeDB" id="O29165"/>
<dbReference type="BioCyc" id="MetaCyc:AF_RS05560-MONOMER"/>
<dbReference type="Proteomes" id="UP000002199">
    <property type="component" value="Chromosome"/>
</dbReference>
<dbReference type="GO" id="GO:0051539">
    <property type="term" value="F:4 iron, 4 sulfur cluster binding"/>
    <property type="evidence" value="ECO:0007669"/>
    <property type="project" value="UniProtKB-KW"/>
</dbReference>
<dbReference type="GO" id="GO:0043885">
    <property type="term" value="F:anaerobic carbon-monoxide dehydrogenase activity"/>
    <property type="evidence" value="ECO:0007669"/>
    <property type="project" value="UniProtKB-UniRule"/>
</dbReference>
<dbReference type="GO" id="GO:0050418">
    <property type="term" value="F:hydroxylamine reductase activity"/>
    <property type="evidence" value="ECO:0007669"/>
    <property type="project" value="TreeGrafter"/>
</dbReference>
<dbReference type="GO" id="GO:0005506">
    <property type="term" value="F:iron ion binding"/>
    <property type="evidence" value="ECO:0007669"/>
    <property type="project" value="UniProtKB-UniRule"/>
</dbReference>
<dbReference type="GO" id="GO:0016151">
    <property type="term" value="F:nickel cation binding"/>
    <property type="evidence" value="ECO:0007669"/>
    <property type="project" value="UniProtKB-UniRule"/>
</dbReference>
<dbReference type="GO" id="GO:0004601">
    <property type="term" value="F:peroxidase activity"/>
    <property type="evidence" value="ECO:0007669"/>
    <property type="project" value="TreeGrafter"/>
</dbReference>
<dbReference type="GO" id="GO:0006084">
    <property type="term" value="P:acetyl-CoA metabolic process"/>
    <property type="evidence" value="ECO:0007669"/>
    <property type="project" value="InterPro"/>
</dbReference>
<dbReference type="GO" id="GO:0042542">
    <property type="term" value="P:response to hydrogen peroxide"/>
    <property type="evidence" value="ECO:0007669"/>
    <property type="project" value="TreeGrafter"/>
</dbReference>
<dbReference type="CDD" id="cd01916">
    <property type="entry name" value="ACS_1"/>
    <property type="match status" value="1"/>
</dbReference>
<dbReference type="Gene3D" id="3.30.70.20">
    <property type="match status" value="1"/>
</dbReference>
<dbReference type="Gene3D" id="3.40.50.2030">
    <property type="match status" value="2"/>
</dbReference>
<dbReference type="Gene3D" id="1.10.8.190">
    <property type="entry name" value="Carbon monoxide dehydrogenase alpha subunit. Chain M, domain 1"/>
    <property type="match status" value="1"/>
</dbReference>
<dbReference type="HAMAP" id="MF_01137">
    <property type="entry name" value="CdhA"/>
    <property type="match status" value="1"/>
</dbReference>
<dbReference type="InterPro" id="IPR017896">
    <property type="entry name" value="4Fe4S_Fe-S-bd"/>
</dbReference>
<dbReference type="InterPro" id="IPR017900">
    <property type="entry name" value="4Fe4S_Fe_S_CS"/>
</dbReference>
<dbReference type="InterPro" id="IPR004460">
    <property type="entry name" value="CdhA"/>
</dbReference>
<dbReference type="InterPro" id="IPR004137">
    <property type="entry name" value="HCP/CODH"/>
</dbReference>
<dbReference type="InterPro" id="IPR016099">
    <property type="entry name" value="Prismane-like_a/b-sand"/>
</dbReference>
<dbReference type="InterPro" id="IPR011254">
    <property type="entry name" value="Prismane-like_sf"/>
</dbReference>
<dbReference type="NCBIfam" id="TIGR00314">
    <property type="entry name" value="cdhA"/>
    <property type="match status" value="1"/>
</dbReference>
<dbReference type="PANTHER" id="PTHR30109:SF6">
    <property type="entry name" value="ACETYL-COA DECARBONYLASE_SYNTHASE COMPLEX SUBUNIT ALPHA"/>
    <property type="match status" value="1"/>
</dbReference>
<dbReference type="PANTHER" id="PTHR30109">
    <property type="entry name" value="HYDROXYLAMINE REDUCTASE"/>
    <property type="match status" value="1"/>
</dbReference>
<dbReference type="Pfam" id="PF13183">
    <property type="entry name" value="Fer4_8"/>
    <property type="match status" value="1"/>
</dbReference>
<dbReference type="Pfam" id="PF03063">
    <property type="entry name" value="Prismane"/>
    <property type="match status" value="2"/>
</dbReference>
<dbReference type="SUPFAM" id="SSF46548">
    <property type="entry name" value="alpha-helical ferredoxin"/>
    <property type="match status" value="1"/>
</dbReference>
<dbReference type="SUPFAM" id="SSF56821">
    <property type="entry name" value="Prismane protein-like"/>
    <property type="match status" value="1"/>
</dbReference>
<dbReference type="PROSITE" id="PS00198">
    <property type="entry name" value="4FE4S_FER_1"/>
    <property type="match status" value="2"/>
</dbReference>
<dbReference type="PROSITE" id="PS51379">
    <property type="entry name" value="4FE4S_FER_2"/>
    <property type="match status" value="2"/>
</dbReference>